<feature type="chain" id="PRO_0000068856" description="Protein archease">
    <location>
        <begin position="1"/>
        <end position="133"/>
    </location>
</feature>
<feature type="binding site" evidence="1">
    <location>
        <position position="11"/>
    </location>
    <ligand>
        <name>Ca(2+)</name>
        <dbReference type="ChEBI" id="CHEBI:29108"/>
    </ligand>
</feature>
<feature type="binding site" evidence="1">
    <location>
        <position position="132"/>
    </location>
    <ligand>
        <name>Ca(2+)</name>
        <dbReference type="ChEBI" id="CHEBI:29108"/>
    </ligand>
</feature>
<feature type="binding site" evidence="1">
    <location>
        <position position="133"/>
    </location>
    <ligand>
        <name>Ca(2+)</name>
        <dbReference type="ChEBI" id="CHEBI:29108"/>
    </ligand>
</feature>
<organism>
    <name type="scientific">Thermoplasma volcanium (strain ATCC 51530 / DSM 4299 / JCM 9571 / NBRC 15438 / GSS1)</name>
    <dbReference type="NCBI Taxonomy" id="273116"/>
    <lineage>
        <taxon>Archaea</taxon>
        <taxon>Methanobacteriati</taxon>
        <taxon>Thermoplasmatota</taxon>
        <taxon>Thermoplasmata</taxon>
        <taxon>Thermoplasmatales</taxon>
        <taxon>Thermoplasmataceae</taxon>
        <taxon>Thermoplasma</taxon>
    </lineage>
</organism>
<protein>
    <recommendedName>
        <fullName evidence="2">Protein archease</fullName>
    </recommendedName>
</protein>
<proteinExistence type="inferred from homology"/>
<name>ARCH_THEVO</name>
<evidence type="ECO:0000250" key="1"/>
<evidence type="ECO:0000255" key="2">
    <source>
        <dbReference type="HAMAP-Rule" id="MF_01222"/>
    </source>
</evidence>
<dbReference type="EMBL" id="BA000011">
    <property type="protein sequence ID" value="BAB60103.1"/>
    <property type="molecule type" value="Genomic_DNA"/>
</dbReference>
<dbReference type="RefSeq" id="WP_010917191.1">
    <property type="nucleotide sequence ID" value="NC_002689.2"/>
</dbReference>
<dbReference type="SMR" id="Q97A49"/>
<dbReference type="STRING" id="273116.gene:9381753"/>
<dbReference type="PaxDb" id="273116-14325178"/>
<dbReference type="GeneID" id="1442039"/>
<dbReference type="KEGG" id="tvo:TVG0986240"/>
<dbReference type="eggNOG" id="arCOG04055">
    <property type="taxonomic scope" value="Archaea"/>
</dbReference>
<dbReference type="HOGENOM" id="CLU_111362_3_0_2"/>
<dbReference type="OrthoDB" id="8831at2157"/>
<dbReference type="PhylomeDB" id="Q97A49"/>
<dbReference type="Proteomes" id="UP000001017">
    <property type="component" value="Chromosome"/>
</dbReference>
<dbReference type="GO" id="GO:0005509">
    <property type="term" value="F:calcium ion binding"/>
    <property type="evidence" value="ECO:0007669"/>
    <property type="project" value="UniProtKB-UniRule"/>
</dbReference>
<dbReference type="GO" id="GO:0006388">
    <property type="term" value="P:tRNA splicing, via endonucleolytic cleavage and ligation"/>
    <property type="evidence" value="ECO:0007669"/>
    <property type="project" value="UniProtKB-UniRule"/>
</dbReference>
<dbReference type="Gene3D" id="3.55.10.10">
    <property type="entry name" value="Archease domain"/>
    <property type="match status" value="1"/>
</dbReference>
<dbReference type="HAMAP" id="MF_01222">
    <property type="entry name" value="Archease_arch"/>
    <property type="match status" value="1"/>
</dbReference>
<dbReference type="InterPro" id="IPR002804">
    <property type="entry name" value="Archease"/>
</dbReference>
<dbReference type="InterPro" id="IPR022952">
    <property type="entry name" value="Archease_arc"/>
</dbReference>
<dbReference type="InterPro" id="IPR023572">
    <property type="entry name" value="Archease_dom"/>
</dbReference>
<dbReference type="InterPro" id="IPR036820">
    <property type="entry name" value="Archease_dom_sf"/>
</dbReference>
<dbReference type="NCBIfam" id="NF001617">
    <property type="entry name" value="PRK00407.1"/>
    <property type="match status" value="1"/>
</dbReference>
<dbReference type="PANTHER" id="PTHR12682">
    <property type="entry name" value="ARCHEASE"/>
    <property type="match status" value="1"/>
</dbReference>
<dbReference type="PANTHER" id="PTHR12682:SF11">
    <property type="entry name" value="PROTEIN ARCHEASE"/>
    <property type="match status" value="1"/>
</dbReference>
<dbReference type="Pfam" id="PF01951">
    <property type="entry name" value="Archease"/>
    <property type="match status" value="1"/>
</dbReference>
<dbReference type="SUPFAM" id="SSF69819">
    <property type="entry name" value="MTH1598-like"/>
    <property type="match status" value="1"/>
</dbReference>
<reference key="1">
    <citation type="journal article" date="2000" name="Proc. Natl. Acad. Sci. U.S.A.">
        <title>Archaeal adaptation to higher temperatures revealed by genomic sequence of Thermoplasma volcanium.</title>
        <authorList>
            <person name="Kawashima T."/>
            <person name="Amano N."/>
            <person name="Koike H."/>
            <person name="Makino S."/>
            <person name="Higuchi S."/>
            <person name="Kawashima-Ohya Y."/>
            <person name="Watanabe K."/>
            <person name="Yamazaki M."/>
            <person name="Kanehori K."/>
            <person name="Kawamoto T."/>
            <person name="Nunoshiba T."/>
            <person name="Yamamoto Y."/>
            <person name="Aramaki H."/>
            <person name="Makino K."/>
            <person name="Suzuki M."/>
        </authorList>
    </citation>
    <scope>NUCLEOTIDE SEQUENCE [LARGE SCALE GENOMIC DNA]</scope>
    <source>
        <strain>ATCC 51530 / DSM 4299 / JCM 9571 / NBRC 15438 / GSS1</strain>
    </source>
</reference>
<gene>
    <name type="ordered locus">TV0961</name>
    <name type="ORF">TVG0986240</name>
</gene>
<accession>Q97A49</accession>
<comment type="function">
    <text evidence="1">Activates the tRNA-splicing ligase complex by facilitating the enzymatic turnover of catalytic subunit RtcB. Acts by promoting the guanylylation of RtcB, a key intermediate step in tRNA ligation. Can also alter the NTP specificity of RtcB such that ATP, dGTP or ITP is used efficiently (By similarity).</text>
</comment>
<comment type="similarity">
    <text evidence="2">Belongs to the archease family.</text>
</comment>
<sequence length="133" mass="15514">MTYEILDHESDIGIMVYGTTYEELFSNAVYAMADLILDVGKLKEKRKMHEIIRGNTPEDIMVNLLSRVLFYVDTYYTLYFRATCKYEDSTLDVYLYGSEIPEEVEYRNVIKAVTYSEIAVKPEDGFARVIFDL</sequence>
<keyword id="KW-0106">Calcium</keyword>
<keyword id="KW-0479">Metal-binding</keyword>
<keyword id="KW-0819">tRNA processing</keyword>